<feature type="chain" id="PRO_0000292673" description="Nuclear factor interleukin-3-regulated protein">
    <location>
        <begin position="1"/>
        <end position="462"/>
    </location>
</feature>
<feature type="domain" description="bZIP" evidence="4">
    <location>
        <begin position="73"/>
        <end position="136"/>
    </location>
</feature>
<feature type="region of interest" description="Basic motif" evidence="4">
    <location>
        <begin position="79"/>
        <end position="95"/>
    </location>
</feature>
<feature type="region of interest" description="Leucine-zipper" evidence="4">
    <location>
        <begin position="101"/>
        <end position="122"/>
    </location>
</feature>
<feature type="region of interest" description="Disordered" evidence="5">
    <location>
        <begin position="263"/>
        <end position="304"/>
    </location>
</feature>
<feature type="compositionally biased region" description="Polar residues" evidence="5">
    <location>
        <begin position="265"/>
        <end position="274"/>
    </location>
</feature>
<proteinExistence type="evidence at transcript level"/>
<gene>
    <name type="primary">nfil3</name>
</gene>
<organism>
    <name type="scientific">Xenopus tropicalis</name>
    <name type="common">Western clawed frog</name>
    <name type="synonym">Silurana tropicalis</name>
    <dbReference type="NCBI Taxonomy" id="8364"/>
    <lineage>
        <taxon>Eukaryota</taxon>
        <taxon>Metazoa</taxon>
        <taxon>Chordata</taxon>
        <taxon>Craniata</taxon>
        <taxon>Vertebrata</taxon>
        <taxon>Euteleostomi</taxon>
        <taxon>Amphibia</taxon>
        <taxon>Batrachia</taxon>
        <taxon>Anura</taxon>
        <taxon>Pipoidea</taxon>
        <taxon>Pipidae</taxon>
        <taxon>Xenopodinae</taxon>
        <taxon>Xenopus</taxon>
        <taxon>Silurana</taxon>
    </lineage>
</organism>
<reference key="1">
    <citation type="submission" date="2005-02" db="EMBL/GenBank/DDBJ databases">
        <authorList>
            <consortium name="NIH - Xenopus Gene Collection (XGC) project"/>
        </authorList>
    </citation>
    <scope>NUCLEOTIDE SEQUENCE [LARGE SCALE MRNA]</scope>
</reference>
<sequence>MQLRKMPTIKREQECADSRNNMENILVLSSNIPDMSESMDSSNDMLYSEGAPAKNKNSSCRRKREFIPDEKKDAMYWEKRRKNNEAAKRSREKRRLNDMVLENKLIALGEENASLKTELLSLKLKFGLISSASYAQEIQKVTTSTAMYFQEYSSSKPNVMSYNSDHEHSVMTSSCISVIKHSPQSSLSDVSEASSVEHVQPSTVQSNCRSTDINFQRIKQEPMERENFSRDAREDSNTFQGSIYTNYIGNTFSGYSHSPPLLHINRSSSNSPRTSEADEGVVGKTSDGEDEQQVPKGPIHSPVELKNGHTTIIKVPEVNSSALPHKLRIKAKAMQIKVEALESELNSTQKLTLPIDMSSKRHLQLEKHNSETMVHSSLSPLSVQVTNIQDWPLKPGQWHHRELDKIPSVCKTSGIVDIKDNVFKASESESLYLKQGIANLSAEVATLKRLIVTQEICASNSS</sequence>
<comment type="function">
    <text evidence="2">May act as a transcriptional regulator of a number of proteins of the circadian clock.</text>
</comment>
<comment type="subunit">
    <text evidence="3">Homodimer (By similarity). Binds DNA as a dimer (By similarity).</text>
</comment>
<comment type="subcellular location">
    <subcellularLocation>
        <location evidence="1">Cytoplasm</location>
    </subcellularLocation>
    <subcellularLocation>
        <location evidence="4">Nucleus</location>
    </subcellularLocation>
</comment>
<comment type="similarity">
    <text evidence="6">Belongs to the bZIP family. NFIL3 subfamily.</text>
</comment>
<protein>
    <recommendedName>
        <fullName>Nuclear factor interleukin-3-regulated protein</fullName>
    </recommendedName>
</protein>
<name>NFIL3_XENTR</name>
<dbReference type="EMBL" id="BC089641">
    <property type="protein sequence ID" value="AAH89641.1"/>
    <property type="molecule type" value="mRNA"/>
</dbReference>
<dbReference type="RefSeq" id="NP_001015710.1">
    <property type="nucleotide sequence ID" value="NM_001015710.1"/>
</dbReference>
<dbReference type="RefSeq" id="XP_012817037.1">
    <property type="nucleotide sequence ID" value="XM_012961583.3"/>
</dbReference>
<dbReference type="RefSeq" id="XP_012817043.1">
    <property type="nucleotide sequence ID" value="XM_012961589.3"/>
</dbReference>
<dbReference type="SMR" id="Q5FW38"/>
<dbReference type="FunCoup" id="Q5FW38">
    <property type="interactions" value="1319"/>
</dbReference>
<dbReference type="STRING" id="8364.ENSXETP00000038058"/>
<dbReference type="PaxDb" id="8364-ENSXETP00000001789"/>
<dbReference type="DNASU" id="548427"/>
<dbReference type="GeneID" id="548427"/>
<dbReference type="KEGG" id="xtr:548427"/>
<dbReference type="AGR" id="Xenbase:XB-GENE-479624"/>
<dbReference type="CTD" id="4783"/>
<dbReference type="Xenbase" id="XB-GENE-479624">
    <property type="gene designation" value="nfil3"/>
</dbReference>
<dbReference type="eggNOG" id="KOG3119">
    <property type="taxonomic scope" value="Eukaryota"/>
</dbReference>
<dbReference type="HOGENOM" id="CLU_052045_0_0_1"/>
<dbReference type="InParanoid" id="Q5FW38"/>
<dbReference type="OMA" id="PVDMTSK"/>
<dbReference type="OrthoDB" id="6151507at2759"/>
<dbReference type="PhylomeDB" id="Q5FW38"/>
<dbReference type="TreeFam" id="TF328374"/>
<dbReference type="Proteomes" id="UP000008143">
    <property type="component" value="Chromosome 1"/>
</dbReference>
<dbReference type="Bgee" id="ENSXETG00000000804">
    <property type="expression patterns" value="Expressed in brain and 15 other cell types or tissues"/>
</dbReference>
<dbReference type="ExpressionAtlas" id="Q5FW38">
    <property type="expression patterns" value="baseline and differential"/>
</dbReference>
<dbReference type="GO" id="GO:0005737">
    <property type="term" value="C:cytoplasm"/>
    <property type="evidence" value="ECO:0007669"/>
    <property type="project" value="UniProtKB-SubCell"/>
</dbReference>
<dbReference type="GO" id="GO:0005634">
    <property type="term" value="C:nucleus"/>
    <property type="evidence" value="ECO:0007669"/>
    <property type="project" value="UniProtKB-SubCell"/>
</dbReference>
<dbReference type="GO" id="GO:0003677">
    <property type="term" value="F:DNA binding"/>
    <property type="evidence" value="ECO:0007669"/>
    <property type="project" value="UniProtKB-KW"/>
</dbReference>
<dbReference type="GO" id="GO:0003700">
    <property type="term" value="F:DNA-binding transcription factor activity"/>
    <property type="evidence" value="ECO:0007669"/>
    <property type="project" value="InterPro"/>
</dbReference>
<dbReference type="GO" id="GO:0007623">
    <property type="term" value="P:circadian rhythm"/>
    <property type="evidence" value="ECO:0007669"/>
    <property type="project" value="InterPro"/>
</dbReference>
<dbReference type="GO" id="GO:0006955">
    <property type="term" value="P:immune response"/>
    <property type="evidence" value="ECO:0007669"/>
    <property type="project" value="InterPro"/>
</dbReference>
<dbReference type="GO" id="GO:0045892">
    <property type="term" value="P:negative regulation of DNA-templated transcription"/>
    <property type="evidence" value="ECO:0000250"/>
    <property type="project" value="UniProtKB"/>
</dbReference>
<dbReference type="GO" id="GO:0006366">
    <property type="term" value="P:transcription by RNA polymerase II"/>
    <property type="evidence" value="ECO:0007669"/>
    <property type="project" value="InterPro"/>
</dbReference>
<dbReference type="CDD" id="cd14694">
    <property type="entry name" value="bZIP_NFIL3"/>
    <property type="match status" value="1"/>
</dbReference>
<dbReference type="FunFam" id="1.20.5.170:FF:000025">
    <property type="entry name" value="nuclear factor interleukin-3-regulated protein-like"/>
    <property type="match status" value="1"/>
</dbReference>
<dbReference type="Gene3D" id="1.20.5.170">
    <property type="match status" value="1"/>
</dbReference>
<dbReference type="InterPro" id="IPR004827">
    <property type="entry name" value="bZIP"/>
</dbReference>
<dbReference type="InterPro" id="IPR046347">
    <property type="entry name" value="bZIP_sf"/>
</dbReference>
<dbReference type="InterPro" id="IPR047229">
    <property type="entry name" value="NFIL3-like"/>
</dbReference>
<dbReference type="InterPro" id="IPR047106">
    <property type="entry name" value="NFIL3-like_bZIP"/>
</dbReference>
<dbReference type="InterPro" id="IPR016743">
    <property type="entry name" value="NFIL3/E4BP4"/>
</dbReference>
<dbReference type="InterPro" id="IPR010533">
    <property type="entry name" value="Vert_IL3-reg_TF"/>
</dbReference>
<dbReference type="PANTHER" id="PTHR15284">
    <property type="entry name" value="NUCLEAR FACTOR INTERLEUKIN-3-REGULATED PROTEIN"/>
    <property type="match status" value="1"/>
</dbReference>
<dbReference type="PANTHER" id="PTHR15284:SF1">
    <property type="entry name" value="NUCLEAR FACTOR INTERLEUKIN-3-REGULATED PROTEIN"/>
    <property type="match status" value="1"/>
</dbReference>
<dbReference type="Pfam" id="PF07716">
    <property type="entry name" value="bZIP_2"/>
    <property type="match status" value="1"/>
</dbReference>
<dbReference type="Pfam" id="PF06529">
    <property type="entry name" value="Vert_IL3-reg_TF"/>
    <property type="match status" value="1"/>
</dbReference>
<dbReference type="PIRSF" id="PIRSF019029">
    <property type="entry name" value="bZIP_E4BP4"/>
    <property type="match status" value="1"/>
</dbReference>
<dbReference type="SMART" id="SM00338">
    <property type="entry name" value="BRLZ"/>
    <property type="match status" value="1"/>
</dbReference>
<dbReference type="SUPFAM" id="SSF57959">
    <property type="entry name" value="Leucine zipper domain"/>
    <property type="match status" value="1"/>
</dbReference>
<dbReference type="PROSITE" id="PS50217">
    <property type="entry name" value="BZIP"/>
    <property type="match status" value="1"/>
</dbReference>
<dbReference type="PROSITE" id="PS00036">
    <property type="entry name" value="BZIP_BASIC"/>
    <property type="match status" value="1"/>
</dbReference>
<keyword id="KW-0010">Activator</keyword>
<keyword id="KW-0090">Biological rhythms</keyword>
<keyword id="KW-0963">Cytoplasm</keyword>
<keyword id="KW-0238">DNA-binding</keyword>
<keyword id="KW-0539">Nucleus</keyword>
<keyword id="KW-1185">Reference proteome</keyword>
<keyword id="KW-0678">Repressor</keyword>
<keyword id="KW-0804">Transcription</keyword>
<keyword id="KW-0805">Transcription regulation</keyword>
<evidence type="ECO:0000250" key="1"/>
<evidence type="ECO:0000250" key="2">
    <source>
        <dbReference type="UniProtKB" id="O08750"/>
    </source>
</evidence>
<evidence type="ECO:0000250" key="3">
    <source>
        <dbReference type="UniProtKB" id="Q16649"/>
    </source>
</evidence>
<evidence type="ECO:0000255" key="4">
    <source>
        <dbReference type="PROSITE-ProRule" id="PRU00978"/>
    </source>
</evidence>
<evidence type="ECO:0000256" key="5">
    <source>
        <dbReference type="SAM" id="MobiDB-lite"/>
    </source>
</evidence>
<evidence type="ECO:0000305" key="6"/>
<accession>Q5FW38</accession>